<gene>
    <name evidence="1" type="primary">hisA</name>
    <name type="ordered locus">Sfum_1215</name>
</gene>
<dbReference type="EC" id="5.3.1.16" evidence="1"/>
<dbReference type="EMBL" id="CP000478">
    <property type="protein sequence ID" value="ABK16907.1"/>
    <property type="molecule type" value="Genomic_DNA"/>
</dbReference>
<dbReference type="RefSeq" id="WP_011698078.1">
    <property type="nucleotide sequence ID" value="NC_008554.1"/>
</dbReference>
<dbReference type="SMR" id="A0LHK5"/>
<dbReference type="FunCoup" id="A0LHK5">
    <property type="interactions" value="488"/>
</dbReference>
<dbReference type="STRING" id="335543.Sfum_1215"/>
<dbReference type="KEGG" id="sfu:Sfum_1215"/>
<dbReference type="eggNOG" id="COG0106">
    <property type="taxonomic scope" value="Bacteria"/>
</dbReference>
<dbReference type="HOGENOM" id="CLU_048577_1_1_7"/>
<dbReference type="InParanoid" id="A0LHK5"/>
<dbReference type="OrthoDB" id="9807749at2"/>
<dbReference type="UniPathway" id="UPA00031">
    <property type="reaction ID" value="UER00009"/>
</dbReference>
<dbReference type="Proteomes" id="UP000001784">
    <property type="component" value="Chromosome"/>
</dbReference>
<dbReference type="GO" id="GO:0005737">
    <property type="term" value="C:cytoplasm"/>
    <property type="evidence" value="ECO:0007669"/>
    <property type="project" value="UniProtKB-SubCell"/>
</dbReference>
<dbReference type="GO" id="GO:0003949">
    <property type="term" value="F:1-(5-phosphoribosyl)-5-[(5-phosphoribosylamino)methylideneamino]imidazole-4-carboxamide isomerase activity"/>
    <property type="evidence" value="ECO:0007669"/>
    <property type="project" value="UniProtKB-UniRule"/>
</dbReference>
<dbReference type="GO" id="GO:0000105">
    <property type="term" value="P:L-histidine biosynthetic process"/>
    <property type="evidence" value="ECO:0007669"/>
    <property type="project" value="UniProtKB-UniRule"/>
</dbReference>
<dbReference type="GO" id="GO:0000162">
    <property type="term" value="P:L-tryptophan biosynthetic process"/>
    <property type="evidence" value="ECO:0007669"/>
    <property type="project" value="TreeGrafter"/>
</dbReference>
<dbReference type="CDD" id="cd04732">
    <property type="entry name" value="HisA"/>
    <property type="match status" value="1"/>
</dbReference>
<dbReference type="FunFam" id="3.20.20.70:FF:000009">
    <property type="entry name" value="1-(5-phosphoribosyl)-5-[(5-phosphoribosylamino)methylideneamino] imidazole-4-carboxamide isomerase"/>
    <property type="match status" value="1"/>
</dbReference>
<dbReference type="Gene3D" id="3.20.20.70">
    <property type="entry name" value="Aldolase class I"/>
    <property type="match status" value="1"/>
</dbReference>
<dbReference type="HAMAP" id="MF_01014">
    <property type="entry name" value="HisA"/>
    <property type="match status" value="1"/>
</dbReference>
<dbReference type="InterPro" id="IPR013785">
    <property type="entry name" value="Aldolase_TIM"/>
</dbReference>
<dbReference type="InterPro" id="IPR006062">
    <property type="entry name" value="His_biosynth"/>
</dbReference>
<dbReference type="InterPro" id="IPR006063">
    <property type="entry name" value="HisA_bact_arch"/>
</dbReference>
<dbReference type="InterPro" id="IPR044524">
    <property type="entry name" value="Isoase_HisA-like"/>
</dbReference>
<dbReference type="InterPro" id="IPR023016">
    <property type="entry name" value="Isoase_HisA-like_bact"/>
</dbReference>
<dbReference type="InterPro" id="IPR011060">
    <property type="entry name" value="RibuloseP-bd_barrel"/>
</dbReference>
<dbReference type="NCBIfam" id="TIGR00007">
    <property type="entry name" value="1-(5-phosphoribosyl)-5-[(5-phosphoribosylamino)methylideneamino]imidazole-4-carboxamide isomerase"/>
    <property type="match status" value="1"/>
</dbReference>
<dbReference type="NCBIfam" id="NF010112">
    <property type="entry name" value="PRK13585.1"/>
    <property type="match status" value="1"/>
</dbReference>
<dbReference type="PANTHER" id="PTHR43090">
    <property type="entry name" value="1-(5-PHOSPHORIBOSYL)-5-[(5-PHOSPHORIBOSYLAMINO)METHYLIDENEAMINO] IMIDAZOLE-4-CARBOXAMIDE ISOMERASE"/>
    <property type="match status" value="1"/>
</dbReference>
<dbReference type="PANTHER" id="PTHR43090:SF2">
    <property type="entry name" value="1-(5-PHOSPHORIBOSYL)-5-[(5-PHOSPHORIBOSYLAMINO)METHYLIDENEAMINO] IMIDAZOLE-4-CARBOXAMIDE ISOMERASE"/>
    <property type="match status" value="1"/>
</dbReference>
<dbReference type="Pfam" id="PF00977">
    <property type="entry name" value="His_biosynth"/>
    <property type="match status" value="1"/>
</dbReference>
<dbReference type="SUPFAM" id="SSF51366">
    <property type="entry name" value="Ribulose-phoshate binding barrel"/>
    <property type="match status" value="1"/>
</dbReference>
<evidence type="ECO:0000255" key="1">
    <source>
        <dbReference type="HAMAP-Rule" id="MF_01014"/>
    </source>
</evidence>
<organism>
    <name type="scientific">Syntrophobacter fumaroxidans (strain DSM 10017 / MPOB)</name>
    <dbReference type="NCBI Taxonomy" id="335543"/>
    <lineage>
        <taxon>Bacteria</taxon>
        <taxon>Pseudomonadati</taxon>
        <taxon>Thermodesulfobacteriota</taxon>
        <taxon>Syntrophobacteria</taxon>
        <taxon>Syntrophobacterales</taxon>
        <taxon>Syntrophobacteraceae</taxon>
        <taxon>Syntrophobacter</taxon>
    </lineage>
</organism>
<accession>A0LHK5</accession>
<protein>
    <recommendedName>
        <fullName evidence="1">1-(5-phosphoribosyl)-5-[(5-phosphoribosylamino)methylideneamino] imidazole-4-carboxamide isomerase</fullName>
        <ecNumber evidence="1">5.3.1.16</ecNumber>
    </recommendedName>
    <alternativeName>
        <fullName evidence="1">Phosphoribosylformimino-5-aminoimidazole carboxamide ribotide isomerase</fullName>
    </alternativeName>
</protein>
<keyword id="KW-0028">Amino-acid biosynthesis</keyword>
<keyword id="KW-0963">Cytoplasm</keyword>
<keyword id="KW-0368">Histidine biosynthesis</keyword>
<keyword id="KW-0413">Isomerase</keyword>
<keyword id="KW-1185">Reference proteome</keyword>
<reference key="1">
    <citation type="submission" date="2006-10" db="EMBL/GenBank/DDBJ databases">
        <title>Complete sequence of Syntrophobacter fumaroxidans MPOB.</title>
        <authorList>
            <consortium name="US DOE Joint Genome Institute"/>
            <person name="Copeland A."/>
            <person name="Lucas S."/>
            <person name="Lapidus A."/>
            <person name="Barry K."/>
            <person name="Detter J.C."/>
            <person name="Glavina del Rio T."/>
            <person name="Hammon N."/>
            <person name="Israni S."/>
            <person name="Pitluck S."/>
            <person name="Goltsman E.G."/>
            <person name="Martinez M."/>
            <person name="Schmutz J."/>
            <person name="Larimer F."/>
            <person name="Land M."/>
            <person name="Hauser L."/>
            <person name="Kyrpides N."/>
            <person name="Kim E."/>
            <person name="Boone D.R."/>
            <person name="Brockman F."/>
            <person name="Culley D."/>
            <person name="Ferry J."/>
            <person name="Gunsalus R."/>
            <person name="McInerney M.J."/>
            <person name="Morrison M."/>
            <person name="Plugge C."/>
            <person name="Rohlin L."/>
            <person name="Scholten J."/>
            <person name="Sieber J."/>
            <person name="Stams A.J.M."/>
            <person name="Worm P."/>
            <person name="Henstra A.M."/>
            <person name="Richardson P."/>
        </authorList>
    </citation>
    <scope>NUCLEOTIDE SEQUENCE [LARGE SCALE GENOMIC DNA]</scope>
    <source>
        <strain>DSM 10017 / MPOB</strain>
    </source>
</reference>
<feature type="chain" id="PRO_0000290556" description="1-(5-phosphoribosyl)-5-[(5-phosphoribosylamino)methylideneamino] imidazole-4-carboxamide isomerase">
    <location>
        <begin position="1"/>
        <end position="256"/>
    </location>
</feature>
<feature type="active site" description="Proton acceptor" evidence="1">
    <location>
        <position position="8"/>
    </location>
</feature>
<feature type="active site" description="Proton donor" evidence="1">
    <location>
        <position position="129"/>
    </location>
</feature>
<name>HIS4_SYNFM</name>
<comment type="catalytic activity">
    <reaction evidence="1">
        <text>1-(5-phospho-beta-D-ribosyl)-5-[(5-phospho-beta-D-ribosylamino)methylideneamino]imidazole-4-carboxamide = 5-[(5-phospho-1-deoxy-D-ribulos-1-ylimino)methylamino]-1-(5-phospho-beta-D-ribosyl)imidazole-4-carboxamide</text>
        <dbReference type="Rhea" id="RHEA:15469"/>
        <dbReference type="ChEBI" id="CHEBI:58435"/>
        <dbReference type="ChEBI" id="CHEBI:58525"/>
        <dbReference type="EC" id="5.3.1.16"/>
    </reaction>
</comment>
<comment type="pathway">
    <text evidence="1">Amino-acid biosynthesis; L-histidine biosynthesis; L-histidine from 5-phospho-alpha-D-ribose 1-diphosphate: step 4/9.</text>
</comment>
<comment type="subcellular location">
    <subcellularLocation>
        <location evidence="1">Cytoplasm</location>
    </subcellularLocation>
</comment>
<comment type="similarity">
    <text evidence="1">Belongs to the HisA/HisF family.</text>
</comment>
<sequence>MIIFPAIDIKDGVCVRLMQGDPDRVTVYGKDPVSVAKRWEGEGAGWLHVVDLDGAFLRRPANRQVVASIVKAVSIPVQVGGGIRNLEAIRDYLDSGVERAIIGTAALRQPEILEQACGLYRSRIALGIDARDGLVAIEGWKETSGTDAVALAKRFEKLDLAAIIYTDIHRDGMQSGVNIEATKRLLESCSIPVIASGGVHTLQDIEDLLPLVPLGLLGVITGKAIYSGTLRFKDALARVREKCGGATPSPNPRRGE</sequence>
<proteinExistence type="inferred from homology"/>